<comment type="function">
    <text evidence="1">Aspartyl-tRNA synthetase with relaxed tRNA specificity since it is able to aspartylate not only its cognate tRNA(Asp) but also tRNA(Asn). Reaction proceeds in two steps: L-aspartate is first activated by ATP to form Asp-AMP and then transferred to the acceptor end of tRNA(Asp/Asn).</text>
</comment>
<comment type="catalytic activity">
    <reaction evidence="1">
        <text>tRNA(Asx) + L-aspartate + ATP = L-aspartyl-tRNA(Asx) + AMP + diphosphate</text>
        <dbReference type="Rhea" id="RHEA:18349"/>
        <dbReference type="Rhea" id="RHEA-COMP:9710"/>
        <dbReference type="Rhea" id="RHEA-COMP:9711"/>
        <dbReference type="ChEBI" id="CHEBI:29991"/>
        <dbReference type="ChEBI" id="CHEBI:30616"/>
        <dbReference type="ChEBI" id="CHEBI:33019"/>
        <dbReference type="ChEBI" id="CHEBI:78442"/>
        <dbReference type="ChEBI" id="CHEBI:78516"/>
        <dbReference type="ChEBI" id="CHEBI:456215"/>
        <dbReference type="EC" id="6.1.1.23"/>
    </reaction>
</comment>
<comment type="subunit">
    <text evidence="1">Homodimer.</text>
</comment>
<comment type="subcellular location">
    <subcellularLocation>
        <location evidence="1">Cytoplasm</location>
    </subcellularLocation>
</comment>
<comment type="similarity">
    <text evidence="1">Belongs to the class-II aminoacyl-tRNA synthetase family. Type 1 subfamily.</text>
</comment>
<sequence length="876" mass="97040">MAATDTPWRPFRQAGALRRPMIDPAFVQGHPAYPDAFAQFFAGHGRYGHFAERVGNRNSRNGWRRRALAPGPAVGAEIVARHHEAAAQAGQGGDAARHQHRVDRLGQHHVRAAFEQVGRHFRLRGRSEHDRHRKGIVGADSPAHPPHQIARLLHAEIRVHHQKVDHFRPEVVFGIVAVVKAQQIPASQHAKGAGDDITAAEVEIAQQGAHTWGVVGHGLPSWQERTTFWPPAFRSPSDRSATSEFVAGLVNIGLSRLDKIWPGMPSSRFGFKRAYEGFMHVYRSHTCGQLKAADAGIQARLSGWVHRKRDHGNLLFVDLRDHYGITQCVIDVSSPVFAALDKARPESVITVTGKVVKRSAETINPRLPTGEIELQVAEVEIQSIADVLPIQVAGDQEYPEDMRLRYRFLDLRREDVHANMMLRSRVIAYLRQAMIGQGFTEFQTPILTASSPEGARDYLVPSRIHPGKFYALPQAPQQFKQLLMVAGFDKYFQIAPCFRDEAGRADRSPGEFYQLDFEMSYVTQDDVFAAIEPVLEGVFKEFGKGRAVTPAPFPRITYADSMLKYGSDKPDLRNPIIIADVTEPFRGSGFGLFAKLVDKGAVVRAIPAPGAAGQPRSWFDKLNDWARENGAGGLGYIQFAADGPKGPIAKNLEPARVEAIKAAANLKDGDAVFFACDKALPAAKFAGLVRTKIGNELDLLEKDVFKFCWTVDFPMYEINEETGLVEFSHNPFSMPQGGMDALLNQDPLTINAYQYDIVCNGVELSSGAIRNHRPDIMYKAFEIAGYSAAHVEEHFGGMLNAFKFGAPPHGGSAPGVDRIVMLLADQPNIREIILFPMNQQAQDLLMQAPAEIAMERLRELHIKVDLPKPKKEVKEG</sequence>
<accession>Q2W3D5</accession>
<organism>
    <name type="scientific">Paramagnetospirillum magneticum (strain ATCC 700264 / AMB-1)</name>
    <name type="common">Magnetospirillum magneticum</name>
    <dbReference type="NCBI Taxonomy" id="342108"/>
    <lineage>
        <taxon>Bacteria</taxon>
        <taxon>Pseudomonadati</taxon>
        <taxon>Pseudomonadota</taxon>
        <taxon>Alphaproteobacteria</taxon>
        <taxon>Rhodospirillales</taxon>
        <taxon>Magnetospirillaceae</taxon>
        <taxon>Paramagnetospirillum</taxon>
    </lineage>
</organism>
<proteinExistence type="inferred from homology"/>
<reference key="1">
    <citation type="journal article" date="2005" name="DNA Res.">
        <title>Complete genome sequence of the facultative anaerobic magnetotactic bacterium Magnetospirillum sp. strain AMB-1.</title>
        <authorList>
            <person name="Matsunaga T."/>
            <person name="Okamura Y."/>
            <person name="Fukuda Y."/>
            <person name="Wahyudi A.T."/>
            <person name="Murase Y."/>
            <person name="Takeyama H."/>
        </authorList>
    </citation>
    <scope>NUCLEOTIDE SEQUENCE [LARGE SCALE GENOMIC DNA]</scope>
    <source>
        <strain>ATCC 700264 / AMB-1</strain>
    </source>
</reference>
<dbReference type="EC" id="6.1.1.23"/>
<dbReference type="EMBL" id="AP007255">
    <property type="protein sequence ID" value="BAE51640.1"/>
    <property type="molecule type" value="Genomic_DNA"/>
</dbReference>
<dbReference type="SMR" id="Q2W3D5"/>
<dbReference type="STRING" id="342108.amb2837"/>
<dbReference type="KEGG" id="mag:amb2837"/>
<dbReference type="HOGENOM" id="CLU_328120_0_0_5"/>
<dbReference type="Proteomes" id="UP000007058">
    <property type="component" value="Chromosome"/>
</dbReference>
<dbReference type="GO" id="GO:0005737">
    <property type="term" value="C:cytoplasm"/>
    <property type="evidence" value="ECO:0007669"/>
    <property type="project" value="UniProtKB-SubCell"/>
</dbReference>
<dbReference type="GO" id="GO:0004815">
    <property type="term" value="F:aspartate-tRNA ligase activity"/>
    <property type="evidence" value="ECO:0007669"/>
    <property type="project" value="UniProtKB-UniRule"/>
</dbReference>
<dbReference type="GO" id="GO:0050560">
    <property type="term" value="F:aspartate-tRNA(Asn) ligase activity"/>
    <property type="evidence" value="ECO:0007669"/>
    <property type="project" value="UniProtKB-EC"/>
</dbReference>
<dbReference type="GO" id="GO:0005524">
    <property type="term" value="F:ATP binding"/>
    <property type="evidence" value="ECO:0007669"/>
    <property type="project" value="UniProtKB-UniRule"/>
</dbReference>
<dbReference type="GO" id="GO:0003676">
    <property type="term" value="F:nucleic acid binding"/>
    <property type="evidence" value="ECO:0007669"/>
    <property type="project" value="InterPro"/>
</dbReference>
<dbReference type="GO" id="GO:0006422">
    <property type="term" value="P:aspartyl-tRNA aminoacylation"/>
    <property type="evidence" value="ECO:0007669"/>
    <property type="project" value="UniProtKB-UniRule"/>
</dbReference>
<dbReference type="CDD" id="cd00777">
    <property type="entry name" value="AspRS_core"/>
    <property type="match status" value="1"/>
</dbReference>
<dbReference type="CDD" id="cd04317">
    <property type="entry name" value="EcAspRS_like_N"/>
    <property type="match status" value="1"/>
</dbReference>
<dbReference type="Gene3D" id="3.30.930.10">
    <property type="entry name" value="Bira Bifunctional Protein, Domain 2"/>
    <property type="match status" value="1"/>
</dbReference>
<dbReference type="Gene3D" id="3.30.1360.30">
    <property type="entry name" value="GAD-like domain"/>
    <property type="match status" value="1"/>
</dbReference>
<dbReference type="Gene3D" id="2.40.50.140">
    <property type="entry name" value="Nucleic acid-binding proteins"/>
    <property type="match status" value="1"/>
</dbReference>
<dbReference type="HAMAP" id="MF_00044">
    <property type="entry name" value="Asp_tRNA_synth_type1"/>
    <property type="match status" value="1"/>
</dbReference>
<dbReference type="InterPro" id="IPR004364">
    <property type="entry name" value="Aa-tRNA-synt_II"/>
</dbReference>
<dbReference type="InterPro" id="IPR006195">
    <property type="entry name" value="aa-tRNA-synth_II"/>
</dbReference>
<dbReference type="InterPro" id="IPR045864">
    <property type="entry name" value="aa-tRNA-synth_II/BPL/LPL"/>
</dbReference>
<dbReference type="InterPro" id="IPR004524">
    <property type="entry name" value="Asp-tRNA-ligase_1"/>
</dbReference>
<dbReference type="InterPro" id="IPR047089">
    <property type="entry name" value="Asp-tRNA-ligase_1_N"/>
</dbReference>
<dbReference type="InterPro" id="IPR002312">
    <property type="entry name" value="Asp/Asn-tRNA-synth_IIb"/>
</dbReference>
<dbReference type="InterPro" id="IPR047090">
    <property type="entry name" value="AspRS_core"/>
</dbReference>
<dbReference type="InterPro" id="IPR004115">
    <property type="entry name" value="GAD-like_sf"/>
</dbReference>
<dbReference type="InterPro" id="IPR029351">
    <property type="entry name" value="GAD_dom"/>
</dbReference>
<dbReference type="InterPro" id="IPR012340">
    <property type="entry name" value="NA-bd_OB-fold"/>
</dbReference>
<dbReference type="InterPro" id="IPR004365">
    <property type="entry name" value="NA-bd_OB_tRNA"/>
</dbReference>
<dbReference type="NCBIfam" id="TIGR00459">
    <property type="entry name" value="aspS_bact"/>
    <property type="match status" value="1"/>
</dbReference>
<dbReference type="NCBIfam" id="NF001750">
    <property type="entry name" value="PRK00476.1"/>
    <property type="match status" value="1"/>
</dbReference>
<dbReference type="PANTHER" id="PTHR22594:SF5">
    <property type="entry name" value="ASPARTATE--TRNA LIGASE, MITOCHONDRIAL"/>
    <property type="match status" value="1"/>
</dbReference>
<dbReference type="PANTHER" id="PTHR22594">
    <property type="entry name" value="ASPARTYL/LYSYL-TRNA SYNTHETASE"/>
    <property type="match status" value="1"/>
</dbReference>
<dbReference type="Pfam" id="PF02938">
    <property type="entry name" value="GAD"/>
    <property type="match status" value="1"/>
</dbReference>
<dbReference type="Pfam" id="PF00152">
    <property type="entry name" value="tRNA-synt_2"/>
    <property type="match status" value="1"/>
</dbReference>
<dbReference type="Pfam" id="PF01336">
    <property type="entry name" value="tRNA_anti-codon"/>
    <property type="match status" value="1"/>
</dbReference>
<dbReference type="PRINTS" id="PR01042">
    <property type="entry name" value="TRNASYNTHASP"/>
</dbReference>
<dbReference type="SUPFAM" id="SSF55681">
    <property type="entry name" value="Class II aaRS and biotin synthetases"/>
    <property type="match status" value="1"/>
</dbReference>
<dbReference type="SUPFAM" id="SSF55261">
    <property type="entry name" value="GAD domain-like"/>
    <property type="match status" value="1"/>
</dbReference>
<dbReference type="SUPFAM" id="SSF50249">
    <property type="entry name" value="Nucleic acid-binding proteins"/>
    <property type="match status" value="1"/>
</dbReference>
<dbReference type="PROSITE" id="PS50862">
    <property type="entry name" value="AA_TRNA_LIGASE_II"/>
    <property type="match status" value="1"/>
</dbReference>
<protein>
    <recommendedName>
        <fullName>Aspartate--tRNA(Asp/Asn) ligase</fullName>
        <ecNumber>6.1.1.23</ecNumber>
    </recommendedName>
    <alternativeName>
        <fullName>Aspartyl-tRNA synthetase</fullName>
        <shortName>AspRS</shortName>
    </alternativeName>
    <alternativeName>
        <fullName>Non-discriminating aspartyl-tRNA synthetase</fullName>
        <shortName>ND-AspRS</shortName>
    </alternativeName>
</protein>
<evidence type="ECO:0000255" key="1">
    <source>
        <dbReference type="HAMAP-Rule" id="MF_00044"/>
    </source>
</evidence>
<name>SYDND_PARM1</name>
<gene>
    <name type="primary">aspS</name>
    <name type="ordered locus">amb2837</name>
</gene>
<keyword id="KW-0030">Aminoacyl-tRNA synthetase</keyword>
<keyword id="KW-0067">ATP-binding</keyword>
<keyword id="KW-0963">Cytoplasm</keyword>
<keyword id="KW-0436">Ligase</keyword>
<keyword id="KW-0547">Nucleotide-binding</keyword>
<keyword id="KW-0648">Protein biosynthesis</keyword>
<feature type="chain" id="PRO_0000235533" description="Aspartate--tRNA(Asp/Asn) ligase">
    <location>
        <begin position="1"/>
        <end position="876"/>
    </location>
</feature>
<feature type="region of interest" description="Unknown">
    <location>
        <begin position="1"/>
        <end position="278"/>
    </location>
</feature>
<feature type="region of interest" description="Aspartyl-tRNA synthetase">
    <location>
        <begin position="279"/>
        <end position="876"/>
    </location>
</feature>
<feature type="region of interest" description="Aspartate" evidence="1">
    <location>
        <begin position="477"/>
        <end position="480"/>
    </location>
</feature>
<feature type="binding site" evidence="1">
    <location>
        <position position="453"/>
    </location>
    <ligand>
        <name>L-aspartate</name>
        <dbReference type="ChEBI" id="CHEBI:29991"/>
    </ligand>
</feature>
<feature type="binding site" evidence="1">
    <location>
        <begin position="499"/>
        <end position="501"/>
    </location>
    <ligand>
        <name>ATP</name>
        <dbReference type="ChEBI" id="CHEBI:30616"/>
    </ligand>
</feature>
<feature type="binding site" evidence="1">
    <location>
        <position position="499"/>
    </location>
    <ligand>
        <name>L-aspartate</name>
        <dbReference type="ChEBI" id="CHEBI:29991"/>
    </ligand>
</feature>
<feature type="binding site" evidence="1">
    <location>
        <position position="729"/>
    </location>
    <ligand>
        <name>L-aspartate</name>
        <dbReference type="ChEBI" id="CHEBI:29991"/>
    </ligand>
</feature>
<feature type="binding site" evidence="1">
    <location>
        <position position="763"/>
    </location>
    <ligand>
        <name>ATP</name>
        <dbReference type="ChEBI" id="CHEBI:30616"/>
    </ligand>
</feature>
<feature type="binding site" evidence="1">
    <location>
        <position position="770"/>
    </location>
    <ligand>
        <name>L-aspartate</name>
        <dbReference type="ChEBI" id="CHEBI:29991"/>
    </ligand>
</feature>
<feature type="binding site" evidence="1">
    <location>
        <begin position="815"/>
        <end position="818"/>
    </location>
    <ligand>
        <name>ATP</name>
        <dbReference type="ChEBI" id="CHEBI:30616"/>
    </ligand>
</feature>
<feature type="site" description="Important for tRNA non-discrimination" evidence="1">
    <location>
        <position position="311"/>
    </location>
</feature>